<feature type="chain" id="PRO_0000457690" description="Protein OPG079">
    <location>
        <begin position="1"/>
        <end position="269"/>
    </location>
</feature>
<reference key="1">
    <citation type="journal article" date="2022" name="J. Infect. Dis.">
        <title>Exportation of Monkeypox virus from the African continent.</title>
        <authorList>
            <person name="Mauldin M.R."/>
            <person name="McCollum A.M."/>
            <person name="Nakazawa Y.J."/>
            <person name="Mandra A."/>
            <person name="Whitehouse E.R."/>
            <person name="Davidson W."/>
            <person name="Zhao H."/>
            <person name="Gao J."/>
            <person name="Li Y."/>
            <person name="Doty J."/>
            <person name="Yinka-Ogunleye A."/>
            <person name="Akinpelu A."/>
            <person name="Aruna O."/>
            <person name="Naidoo D."/>
            <person name="Lewandowski K."/>
            <person name="Afrough B."/>
            <person name="Graham V."/>
            <person name="Aarons E."/>
            <person name="Hewson R."/>
            <person name="Vipond R."/>
            <person name="Dunning J."/>
            <person name="Chand M."/>
            <person name="Brown C."/>
            <person name="Cohen-Gihon I."/>
            <person name="Erez N."/>
            <person name="Shifman O."/>
            <person name="Israeli O."/>
            <person name="Sharon M."/>
            <person name="Schwartz E."/>
            <person name="Beth-Din A."/>
            <person name="Zvi A."/>
            <person name="Mak T.M."/>
            <person name="Ng Y.K."/>
            <person name="Cui L."/>
            <person name="Lin R.T.P."/>
            <person name="Olson V.A."/>
            <person name="Brooks T."/>
            <person name="Paran N."/>
            <person name="Ihekweazu C."/>
            <person name="Reynolds M.G."/>
        </authorList>
    </citation>
    <scope>NUCLEOTIDE SEQUENCE [LARGE SCALE GENOMIC DNA]</scope>
    <source>
        <strain>MPXV-M5312_HM12_Rivers</strain>
    </source>
</reference>
<keyword id="KW-0226">DNA condensation</keyword>
<keyword id="KW-0238">DNA-binding</keyword>
<keyword id="KW-0244">Early protein</keyword>
<keyword id="KW-1035">Host cytoplasm</keyword>
<keyword id="KW-1185">Reference proteome</keyword>
<organismHost>
    <name type="scientific">Cynomys gunnisoni</name>
    <name type="common">Gunnison's prairie dog</name>
    <name type="synonym">Spermophilus gunnisoni</name>
    <dbReference type="NCBI Taxonomy" id="45479"/>
</organismHost>
<organismHost>
    <name type="scientific">Cynomys leucurus</name>
    <name type="common">White-tailed prairie dog</name>
    <dbReference type="NCBI Taxonomy" id="99825"/>
</organismHost>
<organismHost>
    <name type="scientific">Cynomys ludovicianus</name>
    <name type="common">Black-tailed prairie dog</name>
    <dbReference type="NCBI Taxonomy" id="45480"/>
</organismHost>
<organismHost>
    <name type="scientific">Cynomys mexicanus</name>
    <name type="common">Mexican prairie dog</name>
    <dbReference type="NCBI Taxonomy" id="99826"/>
</organismHost>
<organismHost>
    <name type="scientific">Cynomys parvidens</name>
    <name type="common">Utah prairie dog</name>
    <dbReference type="NCBI Taxonomy" id="99827"/>
</organismHost>
<organismHost>
    <name type="scientific">Gliridae</name>
    <name type="common">dormice</name>
    <dbReference type="NCBI Taxonomy" id="30650"/>
</organismHost>
<organismHost>
    <name type="scientific">Heliosciurus ruwenzorii</name>
    <name type="common">Ruwenzori sun squirrel</name>
    <dbReference type="NCBI Taxonomy" id="226685"/>
</organismHost>
<organismHost>
    <name type="scientific">Homo sapiens</name>
    <name type="common">Human</name>
    <dbReference type="NCBI Taxonomy" id="9606"/>
</organismHost>
<organismHost>
    <name type="scientific">Mus musculus</name>
    <name type="common">Mouse</name>
    <dbReference type="NCBI Taxonomy" id="10090"/>
</organismHost>
<protein>
    <recommendedName>
        <fullName>Protein OPG079</fullName>
    </recommendedName>
</protein>
<sequence length="269" mass="29910">MSKVIKKRVETSPRPTASSDSLQTCAGVIEYAKSISKSNAKCIECVTLNASQYANCSSISIKLTDSLSSQMTSTFIMLEGETKLYKNKSKQDRSDGYFLKIKVTAASPMLYQLLEAVYGNITHKERIPNSLHSLSAETITEKTFKDESIFINKLNGAMVEYVSTGESSILRSIEGELESLSKRERQLAKAIITPVVFYRSGTETKITFALKKLIIDREVVANVIGLSGDSERVSMTENVEEDLVRNLGLVDIDDEYDEDSDKEKPIFNV</sequence>
<comment type="function">
    <text evidence="1">Plays an essential role in viral DNA replication. Binds to ssDNA with high affinity and localizes to cytoplasmic factories where nascent viral genomes accumulate. May disrupt loops, hairpins and other secondary structures present on ssDNA to reduce and eliminate pausing of viral DNA polymerase at specific sites during elongation.</text>
</comment>
<comment type="subunit">
    <text evidence="1">Homoomultimer (Potential). Interacts with the small subunit of ribonucleotide reductase (By similarity).</text>
</comment>
<comment type="subcellular location">
    <subcellularLocation>
        <location evidence="1">Host cytoplasm</location>
    </subcellularLocation>
    <text evidence="1">Localizes in cytoplasmic virus factories, where it is associated with viral DNA.</text>
</comment>
<comment type="induction">
    <text evidence="1">Expressed in the early phase of the viral replicative cycle.</text>
</comment>
<comment type="similarity">
    <text evidence="2">Belongs to the orthopoxvirus OPG079 family.</text>
</comment>
<organism>
    <name type="scientific">Monkeypox virus</name>
    <dbReference type="NCBI Taxonomy" id="10244"/>
    <lineage>
        <taxon>Viruses</taxon>
        <taxon>Varidnaviria</taxon>
        <taxon>Bamfordvirae</taxon>
        <taxon>Nucleocytoviricota</taxon>
        <taxon>Pokkesviricetes</taxon>
        <taxon>Chitovirales</taxon>
        <taxon>Poxviridae</taxon>
        <taxon>Chordopoxvirinae</taxon>
        <taxon>Orthopoxvirus</taxon>
    </lineage>
</organism>
<gene>
    <name type="primary">OPG079</name>
    <name type="ORF">MPXVgp064</name>
</gene>
<accession>A0A7H0DN51</accession>
<dbReference type="EMBL" id="MT903340">
    <property type="protein sequence ID" value="QNP12934.1"/>
    <property type="molecule type" value="Genomic_DNA"/>
</dbReference>
<dbReference type="RefSeq" id="YP_010377061.1">
    <property type="nucleotide sequence ID" value="NC_063383.1"/>
</dbReference>
<dbReference type="GeneID" id="72551474"/>
<dbReference type="Proteomes" id="UP000516359">
    <property type="component" value="Genome"/>
</dbReference>
<dbReference type="GO" id="GO:0030430">
    <property type="term" value="C:host cell cytoplasm"/>
    <property type="evidence" value="ECO:0007669"/>
    <property type="project" value="UniProtKB-SubCell"/>
</dbReference>
<dbReference type="GO" id="GO:0003697">
    <property type="term" value="F:single-stranded DNA binding"/>
    <property type="evidence" value="ECO:0007669"/>
    <property type="project" value="InterPro"/>
</dbReference>
<dbReference type="GO" id="GO:0030261">
    <property type="term" value="P:chromosome condensation"/>
    <property type="evidence" value="ECO:0007669"/>
    <property type="project" value="UniProtKB-KW"/>
</dbReference>
<dbReference type="InterPro" id="IPR006754">
    <property type="entry name" value="Poxvirus_I3_ssDNA-bd"/>
</dbReference>
<dbReference type="Pfam" id="PF04661">
    <property type="entry name" value="Pox_I3"/>
    <property type="match status" value="1"/>
</dbReference>
<dbReference type="PIRSF" id="PIRSF003767">
    <property type="entry name" value="VAC_I3L"/>
    <property type="match status" value="1"/>
</dbReference>
<proteinExistence type="inferred from homology"/>
<evidence type="ECO:0000250" key="1">
    <source>
        <dbReference type="UniProtKB" id="P12923"/>
    </source>
</evidence>
<evidence type="ECO:0000305" key="2"/>
<name>PG079_MONPV</name>